<evidence type="ECO:0000250" key="1">
    <source>
        <dbReference type="UniProtKB" id="Q9UHE5"/>
    </source>
</evidence>
<evidence type="ECO:0000255" key="2">
    <source>
        <dbReference type="PROSITE-ProRule" id="PRU00532"/>
    </source>
</evidence>
<evidence type="ECO:0000269" key="3">
    <source>
    </source>
</evidence>
<evidence type="ECO:0000269" key="4">
    <source>
    </source>
</evidence>
<evidence type="ECO:0000305" key="5"/>
<evidence type="ECO:0000312" key="6">
    <source>
        <dbReference type="EMBL" id="AAF80486.1"/>
    </source>
</evidence>
<evidence type="ECO:0000312" key="7">
    <source>
        <dbReference type="EMBL" id="AAH19517.1"/>
    </source>
</evidence>
<evidence type="ECO:0000312" key="8">
    <source>
        <dbReference type="EMBL" id="BAB22356.1"/>
    </source>
</evidence>
<keyword id="KW-0012">Acyltransferase</keyword>
<keyword id="KW-0256">Endoplasmic reticulum</keyword>
<keyword id="KW-0472">Membrane</keyword>
<keyword id="KW-1185">Reference proteome</keyword>
<keyword id="KW-0735">Signal-anchor</keyword>
<keyword id="KW-0808">Transferase</keyword>
<keyword id="KW-0812">Transmembrane</keyword>
<keyword id="KW-1133">Transmembrane helix</keyword>
<organism>
    <name type="scientific">Mus musculus</name>
    <name type="common">Mouse</name>
    <dbReference type="NCBI Taxonomy" id="10090"/>
    <lineage>
        <taxon>Eukaryota</taxon>
        <taxon>Metazoa</taxon>
        <taxon>Chordata</taxon>
        <taxon>Craniata</taxon>
        <taxon>Vertebrata</taxon>
        <taxon>Euteleostomi</taxon>
        <taxon>Mammalia</taxon>
        <taxon>Eutheria</taxon>
        <taxon>Euarchontoglires</taxon>
        <taxon>Glires</taxon>
        <taxon>Rodentia</taxon>
        <taxon>Myomorpha</taxon>
        <taxon>Muroidea</taxon>
        <taxon>Muridae</taxon>
        <taxon>Murinae</taxon>
        <taxon>Mus</taxon>
        <taxon>Mus</taxon>
    </lineage>
</organism>
<feature type="chain" id="PRO_0000284692" description="N-acetyltransferase 8">
    <location>
        <begin position="1"/>
        <end position="227"/>
    </location>
</feature>
<feature type="topological domain" description="Cytoplasmic" evidence="1">
    <location>
        <begin position="1"/>
        <end position="35"/>
    </location>
</feature>
<feature type="transmembrane region" description="Helical; Signal-anchor for type II membrane protein" evidence="1">
    <location>
        <begin position="36"/>
        <end position="56"/>
    </location>
</feature>
<feature type="topological domain" description="Lumenal" evidence="1">
    <location>
        <begin position="57"/>
        <end position="227"/>
    </location>
</feature>
<feature type="domain" description="N-acetyltransferase" evidence="2">
    <location>
        <begin position="69"/>
        <end position="217"/>
    </location>
</feature>
<proteinExistence type="evidence at protein level"/>
<accession>Q9JIY7</accession>
<comment type="function">
    <text evidence="1 4">Endoplasmic reticulum (ER)-membrane-bound lysine N-acetyltransferase catalyzing the N6-acetylation of lysine residues in the lumen of the ER in various proteins, including PROM1 and BACE1, using acetyl-CoA as acetyl donor. Thereby, may regulate apoptosis through the acetylation and the regulation of the expression of PROM1. May also regulate amyloid beta-peptide secretion through acetylation of BACE1 and the regulation of its expression in neurons (By similarity). N(6)-lysine acetylation in the ER maintains protein homeostasis and regulates reticulophagy (PubMed:33846551). Alternatively, acetylates the free alpha-amino group of cysteine S-conjugates to form mercapturic acids. This is the final step in a major route for detoxification of a wide variety of reactive electrophiles which starts with their incorporation into glutathione S-conjugates. The glutathione S-conjugates are then further processed into cysteine S-conjugates and finally mercapturic acids which are water soluble and can be readily excreted in urine or bile (By similarity).</text>
</comment>
<comment type="catalytic activity">
    <reaction evidence="1">
        <text>L-lysyl-[protein] + acetyl-CoA = N(6)-acetyl-L-lysyl-[protein] + CoA + H(+)</text>
        <dbReference type="Rhea" id="RHEA:45948"/>
        <dbReference type="Rhea" id="RHEA-COMP:9752"/>
        <dbReference type="Rhea" id="RHEA-COMP:10731"/>
        <dbReference type="ChEBI" id="CHEBI:15378"/>
        <dbReference type="ChEBI" id="CHEBI:29969"/>
        <dbReference type="ChEBI" id="CHEBI:57287"/>
        <dbReference type="ChEBI" id="CHEBI:57288"/>
        <dbReference type="ChEBI" id="CHEBI:61930"/>
    </reaction>
    <physiologicalReaction direction="left-to-right" evidence="1">
        <dbReference type="Rhea" id="RHEA:45949"/>
    </physiologicalReaction>
</comment>
<comment type="catalytic activity">
    <reaction evidence="1">
        <text>an S-substituted L-cysteine + acetyl-CoA = an N-acetyl-L-cysteine-S-conjugate + CoA + H(+)</text>
        <dbReference type="Rhea" id="RHEA:19213"/>
        <dbReference type="ChEBI" id="CHEBI:15378"/>
        <dbReference type="ChEBI" id="CHEBI:57287"/>
        <dbReference type="ChEBI" id="CHEBI:57288"/>
        <dbReference type="ChEBI" id="CHEBI:58717"/>
        <dbReference type="ChEBI" id="CHEBI:58718"/>
        <dbReference type="EC" id="2.3.1.80"/>
    </reaction>
    <physiologicalReaction direction="left-to-right" evidence="1">
        <dbReference type="Rhea" id="RHEA:19214"/>
    </physiologicalReaction>
</comment>
<comment type="pathway">
    <text evidence="1">Sulfur metabolism; glutathione metabolism.</text>
</comment>
<comment type="subcellular location">
    <subcellularLocation>
        <location evidence="1">Endoplasmic reticulum-Golgi intermediate compartment membrane</location>
        <topology evidence="1">Single-pass type II membrane protein</topology>
    </subcellularLocation>
    <subcellularLocation>
        <location evidence="1">Endoplasmic reticulum membrane</location>
        <topology evidence="1">Single-pass type II membrane protein</topology>
    </subcellularLocation>
</comment>
<comment type="tissue specificity">
    <text evidence="3">Expressed in brain (at protein level).</text>
</comment>
<comment type="disruption phenotype">
    <text evidence="4">Nat8-deficient mice are born with Mendelian ratio and do not exhibit any apparent physical abnormalities. However, Nat8bb-deficient mice exhibit activated macroautophagy.</text>
</comment>
<comment type="similarity">
    <text evidence="5">Belongs to the NAT8 family.</text>
</comment>
<name>NAT8_MOUSE</name>
<reference evidence="6" key="1">
    <citation type="journal article" date="2001" name="Dev. Biol.">
        <title>Overexpression of camello, a member of a novel protein family, reduces blastomere adhesion and inhibits gastrulation in Xenopus laevis.</title>
        <authorList>
            <person name="Popsueva A.E."/>
            <person name="Luchinskaya N.N."/>
            <person name="Ludwig A.V."/>
            <person name="Zinovjeva O.Y."/>
            <person name="Poteryaev D.A."/>
            <person name="Feigelman M.M."/>
            <person name="Ponomarev M.B."/>
            <person name="Berekelya L."/>
            <person name="Belyavsky A.V."/>
        </authorList>
    </citation>
    <scope>NUCLEOTIDE SEQUENCE [MRNA]</scope>
</reference>
<reference evidence="8" key="2">
    <citation type="journal article" date="2005" name="Science">
        <title>The transcriptional landscape of the mammalian genome.</title>
        <authorList>
            <person name="Carninci P."/>
            <person name="Kasukawa T."/>
            <person name="Katayama S."/>
            <person name="Gough J."/>
            <person name="Frith M.C."/>
            <person name="Maeda N."/>
            <person name="Oyama R."/>
            <person name="Ravasi T."/>
            <person name="Lenhard B."/>
            <person name="Wells C."/>
            <person name="Kodzius R."/>
            <person name="Shimokawa K."/>
            <person name="Bajic V.B."/>
            <person name="Brenner S.E."/>
            <person name="Batalov S."/>
            <person name="Forrest A.R."/>
            <person name="Zavolan M."/>
            <person name="Davis M.J."/>
            <person name="Wilming L.G."/>
            <person name="Aidinis V."/>
            <person name="Allen J.E."/>
            <person name="Ambesi-Impiombato A."/>
            <person name="Apweiler R."/>
            <person name="Aturaliya R.N."/>
            <person name="Bailey T.L."/>
            <person name="Bansal M."/>
            <person name="Baxter L."/>
            <person name="Beisel K.W."/>
            <person name="Bersano T."/>
            <person name="Bono H."/>
            <person name="Chalk A.M."/>
            <person name="Chiu K.P."/>
            <person name="Choudhary V."/>
            <person name="Christoffels A."/>
            <person name="Clutterbuck D.R."/>
            <person name="Crowe M.L."/>
            <person name="Dalla E."/>
            <person name="Dalrymple B.P."/>
            <person name="de Bono B."/>
            <person name="Della Gatta G."/>
            <person name="di Bernardo D."/>
            <person name="Down T."/>
            <person name="Engstrom P."/>
            <person name="Fagiolini M."/>
            <person name="Faulkner G."/>
            <person name="Fletcher C.F."/>
            <person name="Fukushima T."/>
            <person name="Furuno M."/>
            <person name="Futaki S."/>
            <person name="Gariboldi M."/>
            <person name="Georgii-Hemming P."/>
            <person name="Gingeras T.R."/>
            <person name="Gojobori T."/>
            <person name="Green R.E."/>
            <person name="Gustincich S."/>
            <person name="Harbers M."/>
            <person name="Hayashi Y."/>
            <person name="Hensch T.K."/>
            <person name="Hirokawa N."/>
            <person name="Hill D."/>
            <person name="Huminiecki L."/>
            <person name="Iacono M."/>
            <person name="Ikeo K."/>
            <person name="Iwama A."/>
            <person name="Ishikawa T."/>
            <person name="Jakt M."/>
            <person name="Kanapin A."/>
            <person name="Katoh M."/>
            <person name="Kawasawa Y."/>
            <person name="Kelso J."/>
            <person name="Kitamura H."/>
            <person name="Kitano H."/>
            <person name="Kollias G."/>
            <person name="Krishnan S.P."/>
            <person name="Kruger A."/>
            <person name="Kummerfeld S.K."/>
            <person name="Kurochkin I.V."/>
            <person name="Lareau L.F."/>
            <person name="Lazarevic D."/>
            <person name="Lipovich L."/>
            <person name="Liu J."/>
            <person name="Liuni S."/>
            <person name="McWilliam S."/>
            <person name="Madan Babu M."/>
            <person name="Madera M."/>
            <person name="Marchionni L."/>
            <person name="Matsuda H."/>
            <person name="Matsuzawa S."/>
            <person name="Miki H."/>
            <person name="Mignone F."/>
            <person name="Miyake S."/>
            <person name="Morris K."/>
            <person name="Mottagui-Tabar S."/>
            <person name="Mulder N."/>
            <person name="Nakano N."/>
            <person name="Nakauchi H."/>
            <person name="Ng P."/>
            <person name="Nilsson R."/>
            <person name="Nishiguchi S."/>
            <person name="Nishikawa S."/>
            <person name="Nori F."/>
            <person name="Ohara O."/>
            <person name="Okazaki Y."/>
            <person name="Orlando V."/>
            <person name="Pang K.C."/>
            <person name="Pavan W.J."/>
            <person name="Pavesi G."/>
            <person name="Pesole G."/>
            <person name="Petrovsky N."/>
            <person name="Piazza S."/>
            <person name="Reed J."/>
            <person name="Reid J.F."/>
            <person name="Ring B.Z."/>
            <person name="Ringwald M."/>
            <person name="Rost B."/>
            <person name="Ruan Y."/>
            <person name="Salzberg S.L."/>
            <person name="Sandelin A."/>
            <person name="Schneider C."/>
            <person name="Schoenbach C."/>
            <person name="Sekiguchi K."/>
            <person name="Semple C.A."/>
            <person name="Seno S."/>
            <person name="Sessa L."/>
            <person name="Sheng Y."/>
            <person name="Shibata Y."/>
            <person name="Shimada H."/>
            <person name="Shimada K."/>
            <person name="Silva D."/>
            <person name="Sinclair B."/>
            <person name="Sperling S."/>
            <person name="Stupka E."/>
            <person name="Sugiura K."/>
            <person name="Sultana R."/>
            <person name="Takenaka Y."/>
            <person name="Taki K."/>
            <person name="Tammoja K."/>
            <person name="Tan S.L."/>
            <person name="Tang S."/>
            <person name="Taylor M.S."/>
            <person name="Tegner J."/>
            <person name="Teichmann S.A."/>
            <person name="Ueda H.R."/>
            <person name="van Nimwegen E."/>
            <person name="Verardo R."/>
            <person name="Wei C.L."/>
            <person name="Yagi K."/>
            <person name="Yamanishi H."/>
            <person name="Zabarovsky E."/>
            <person name="Zhu S."/>
            <person name="Zimmer A."/>
            <person name="Hide W."/>
            <person name="Bult C."/>
            <person name="Grimmond S.M."/>
            <person name="Teasdale R.D."/>
            <person name="Liu E.T."/>
            <person name="Brusic V."/>
            <person name="Quackenbush J."/>
            <person name="Wahlestedt C."/>
            <person name="Mattick J.S."/>
            <person name="Hume D.A."/>
            <person name="Kai C."/>
            <person name="Sasaki D."/>
            <person name="Tomaru Y."/>
            <person name="Fukuda S."/>
            <person name="Kanamori-Katayama M."/>
            <person name="Suzuki M."/>
            <person name="Aoki J."/>
            <person name="Arakawa T."/>
            <person name="Iida J."/>
            <person name="Imamura K."/>
            <person name="Itoh M."/>
            <person name="Kato T."/>
            <person name="Kawaji H."/>
            <person name="Kawagashira N."/>
            <person name="Kawashima T."/>
            <person name="Kojima M."/>
            <person name="Kondo S."/>
            <person name="Konno H."/>
            <person name="Nakano K."/>
            <person name="Ninomiya N."/>
            <person name="Nishio T."/>
            <person name="Okada M."/>
            <person name="Plessy C."/>
            <person name="Shibata K."/>
            <person name="Shiraki T."/>
            <person name="Suzuki S."/>
            <person name="Tagami M."/>
            <person name="Waki K."/>
            <person name="Watahiki A."/>
            <person name="Okamura-Oho Y."/>
            <person name="Suzuki H."/>
            <person name="Kawai J."/>
            <person name="Hayashizaki Y."/>
        </authorList>
    </citation>
    <scope>NUCLEOTIDE SEQUENCE [LARGE SCALE MRNA]</scope>
    <source>
        <strain evidence="8">C57BL/6J</strain>
        <tissue evidence="8">Kidney</tissue>
    </source>
</reference>
<reference evidence="7" key="3">
    <citation type="journal article" date="2004" name="Genome Res.">
        <title>The status, quality, and expansion of the NIH full-length cDNA project: the Mammalian Gene Collection (MGC).</title>
        <authorList>
            <consortium name="The MGC Project Team"/>
        </authorList>
    </citation>
    <scope>NUCLEOTIDE SEQUENCE [LARGE SCALE MRNA]</scope>
    <source>
        <strain evidence="7">FVB/N</strain>
        <tissue evidence="7">Kidney</tissue>
    </source>
</reference>
<reference key="4">
    <citation type="journal article" date="2010" name="Cell">
        <title>A tissue-specific atlas of mouse protein phosphorylation and expression.</title>
        <authorList>
            <person name="Huttlin E.L."/>
            <person name="Jedrychowski M.P."/>
            <person name="Elias J.E."/>
            <person name="Goswami T."/>
            <person name="Rad R."/>
            <person name="Beausoleil S.A."/>
            <person name="Villen J."/>
            <person name="Haas W."/>
            <person name="Sowa M.E."/>
            <person name="Gygi S.P."/>
        </authorList>
    </citation>
    <scope>IDENTIFICATION BY MASS SPECTROMETRY [LARGE SCALE ANALYSIS]</scope>
    <source>
        <tissue>Kidney</tissue>
    </source>
</reference>
<reference key="5">
    <citation type="journal article" date="2012" name="J. Biol. Chem.">
        <title>Biochemical inhibition of the acetyltransferases ATase1 and ATase2 reduces beta-secretase (BACE1) levels and Abeta generation.</title>
        <authorList>
            <person name="Ding Y."/>
            <person name="Ko M.H."/>
            <person name="Pehar M."/>
            <person name="Kotch F."/>
            <person name="Peters N.R."/>
            <person name="Luo Y."/>
            <person name="Salamat S.M."/>
            <person name="Puglielli L."/>
        </authorList>
    </citation>
    <scope>TISSUE SPECIFICITY</scope>
</reference>
<reference key="6">
    <citation type="journal article" date="2021" name="Commun. Biol.">
        <title>Endoplasmic reticulum acetyltransferases Atase1 and Atase2 differentially regulate reticulophagy, macroautophagy and cellular acetyl-CoA metabolism.</title>
        <authorList>
            <person name="Rigby M.J."/>
            <person name="Lawton A.J."/>
            <person name="Kaur G."/>
            <person name="Banduseela V.C."/>
            <person name="Kamm W.E."/>
            <person name="Lakkaraju A."/>
            <person name="Denu J.M."/>
            <person name="Puglielli L."/>
        </authorList>
    </citation>
    <scope>DISRUPTION PHENOTYPE</scope>
    <scope>FUNCTION</scope>
</reference>
<protein>
    <recommendedName>
        <fullName>N-acetyltransferase 8</fullName>
        <ecNumber evidence="1">2.3.1.-</ecNumber>
    </recommendedName>
    <alternativeName>
        <fullName>Acetyltransferase 2</fullName>
        <shortName>ATase2</shortName>
    </alternativeName>
    <alternativeName>
        <fullName>Camello-like protein 4</fullName>
    </alternativeName>
    <alternativeName>
        <fullName>Cysteinyl-conjugate N-acetyltransferase</fullName>
        <shortName>CCNAT</shortName>
        <ecNumber evidence="1">2.3.1.80</ecNumber>
    </alternativeName>
    <alternativeName>
        <fullName evidence="5">Protein-lysine N6-acetyltransferase 8</fullName>
    </alternativeName>
</protein>
<sequence length="227" mass="25638">MASFRIRQFQERDYKQVVDVFSRGMEEHIPTAFRHLLTLPRTLLLLAVVPLAIVLVSGSWFLAVVCIFFLFLFLWFLASKPWKNYVSKCLHTDMADITKSYLSVRGSGFWVAESGGQVVGTVAARPVKDPPLGRKQLQLFRLSVSSQHRGQGIAKALTRTVLQFARDQGYSDVVLVTGLLQQGAVTLYYSMGFQKTGESFVDILTWLVDVSLIHFIYPLPSAQKYEL</sequence>
<gene>
    <name type="primary">Nat8</name>
    <name type="synonym">Cml4</name>
</gene>
<dbReference type="EC" id="2.3.1.-" evidence="1"/>
<dbReference type="EC" id="2.3.1.80" evidence="1"/>
<dbReference type="EMBL" id="AF163317">
    <property type="protein sequence ID" value="AAF80486.1"/>
    <property type="molecule type" value="mRNA"/>
</dbReference>
<dbReference type="EMBL" id="AK002784">
    <property type="protein sequence ID" value="BAB22356.1"/>
    <property type="molecule type" value="mRNA"/>
</dbReference>
<dbReference type="EMBL" id="BC019517">
    <property type="protein sequence ID" value="AAH19517.1"/>
    <property type="molecule type" value="mRNA"/>
</dbReference>
<dbReference type="CCDS" id="CCDS20301.1"/>
<dbReference type="RefSeq" id="NP_001348989.1">
    <property type="nucleotide sequence ID" value="NM_001362060.1"/>
</dbReference>
<dbReference type="RefSeq" id="NP_075944.1">
    <property type="nucleotide sequence ID" value="NM_023455.4"/>
</dbReference>
<dbReference type="RefSeq" id="XP_006506598.1">
    <property type="nucleotide sequence ID" value="XM_006506535.3"/>
</dbReference>
<dbReference type="RefSeq" id="XP_006506599.1">
    <property type="nucleotide sequence ID" value="XM_006506536.3"/>
</dbReference>
<dbReference type="RefSeq" id="XP_006506600.1">
    <property type="nucleotide sequence ID" value="XM_006506537.3"/>
</dbReference>
<dbReference type="FunCoup" id="Q9JIY7">
    <property type="interactions" value="137"/>
</dbReference>
<dbReference type="MINT" id="Q9JIY7"/>
<dbReference type="STRING" id="10090.ENSMUSP00000032073"/>
<dbReference type="iPTMnet" id="Q9JIY7"/>
<dbReference type="PhosphoSitePlus" id="Q9JIY7"/>
<dbReference type="jPOST" id="Q9JIY7"/>
<dbReference type="PaxDb" id="10090-ENSMUSP00000032073"/>
<dbReference type="PeptideAtlas" id="Q9JIY7"/>
<dbReference type="ProteomicsDB" id="287609"/>
<dbReference type="DNASU" id="68396"/>
<dbReference type="Ensembl" id="ENSMUST00000032073.7">
    <property type="protein sequence ID" value="ENSMUSP00000032073.7"/>
    <property type="gene ID" value="ENSMUSG00000030004.7"/>
</dbReference>
<dbReference type="GeneID" id="68396"/>
<dbReference type="KEGG" id="mmu:68396"/>
<dbReference type="UCSC" id="uc009cqh.2">
    <property type="organism name" value="mouse"/>
</dbReference>
<dbReference type="AGR" id="MGI:1915646"/>
<dbReference type="CTD" id="9027"/>
<dbReference type="MGI" id="MGI:1915646">
    <property type="gene designation" value="Nat8"/>
</dbReference>
<dbReference type="VEuPathDB" id="HostDB:ENSMUSG00000030004"/>
<dbReference type="eggNOG" id="KOG3139">
    <property type="taxonomic scope" value="Eukaryota"/>
</dbReference>
<dbReference type="GeneTree" id="ENSGT00950000182932"/>
<dbReference type="HOGENOM" id="CLU_013985_10_1_1"/>
<dbReference type="InParanoid" id="Q9JIY7"/>
<dbReference type="OMA" id="IFTEGMQ"/>
<dbReference type="OrthoDB" id="41532at2759"/>
<dbReference type="PhylomeDB" id="Q9JIY7"/>
<dbReference type="TreeFam" id="TF324687"/>
<dbReference type="UniPathway" id="UPA00204"/>
<dbReference type="BioGRID-ORCS" id="68396">
    <property type="hits" value="2 hits in 80 CRISPR screens"/>
</dbReference>
<dbReference type="ChiTaRS" id="Nat8">
    <property type="organism name" value="mouse"/>
</dbReference>
<dbReference type="PRO" id="PR:Q9JIY7"/>
<dbReference type="Proteomes" id="UP000000589">
    <property type="component" value="Chromosome 6"/>
</dbReference>
<dbReference type="RNAct" id="Q9JIY7">
    <property type="molecule type" value="protein"/>
</dbReference>
<dbReference type="Bgee" id="ENSMUSG00000030004">
    <property type="expression patterns" value="Expressed in right kidney and 57 other cell types or tissues"/>
</dbReference>
<dbReference type="GO" id="GO:0005783">
    <property type="term" value="C:endoplasmic reticulum"/>
    <property type="evidence" value="ECO:0000247"/>
    <property type="project" value="MGI"/>
</dbReference>
<dbReference type="GO" id="GO:0005789">
    <property type="term" value="C:endoplasmic reticulum membrane"/>
    <property type="evidence" value="ECO:0000250"/>
    <property type="project" value="UniProtKB"/>
</dbReference>
<dbReference type="GO" id="GO:0033116">
    <property type="term" value="C:endoplasmic reticulum-Golgi intermediate compartment membrane"/>
    <property type="evidence" value="ECO:0000250"/>
    <property type="project" value="UniProtKB"/>
</dbReference>
<dbReference type="GO" id="GO:0005794">
    <property type="term" value="C:Golgi apparatus"/>
    <property type="evidence" value="ECO:0000247"/>
    <property type="project" value="MGI"/>
</dbReference>
<dbReference type="GO" id="GO:0016020">
    <property type="term" value="C:membrane"/>
    <property type="evidence" value="ECO:0000250"/>
    <property type="project" value="UniProtKB"/>
</dbReference>
<dbReference type="GO" id="GO:0047198">
    <property type="term" value="F:L-cysteine-S-conjugate N-acetyltransferase activity"/>
    <property type="evidence" value="ECO:0000250"/>
    <property type="project" value="UniProtKB"/>
</dbReference>
<dbReference type="GO" id="GO:0008080">
    <property type="term" value="F:N-acetyltransferase activity"/>
    <property type="evidence" value="ECO:0000303"/>
    <property type="project" value="UniProtKB"/>
</dbReference>
<dbReference type="GO" id="GO:0061733">
    <property type="term" value="F:protein-lysine-acetyltransferase activity"/>
    <property type="evidence" value="ECO:0000250"/>
    <property type="project" value="UniProtKB"/>
</dbReference>
<dbReference type="GO" id="GO:0001702">
    <property type="term" value="P:gastrulation with mouth forming second"/>
    <property type="evidence" value="ECO:0000315"/>
    <property type="project" value="UniProtKB"/>
</dbReference>
<dbReference type="GO" id="GO:0006749">
    <property type="term" value="P:glutathione metabolic process"/>
    <property type="evidence" value="ECO:0007669"/>
    <property type="project" value="UniProtKB-UniPathway"/>
</dbReference>
<dbReference type="GO" id="GO:0007162">
    <property type="term" value="P:negative regulation of cell adhesion"/>
    <property type="evidence" value="ECO:0000247"/>
    <property type="project" value="MGI"/>
</dbReference>
<dbReference type="GO" id="GO:0018003">
    <property type="term" value="P:peptidyl-lysine N6-acetylation"/>
    <property type="evidence" value="ECO:0000250"/>
    <property type="project" value="UniProtKB"/>
</dbReference>
<dbReference type="GO" id="GO:0010628">
    <property type="term" value="P:positive regulation of gene expression"/>
    <property type="evidence" value="ECO:0000250"/>
    <property type="project" value="UniProtKB"/>
</dbReference>
<dbReference type="CDD" id="cd04301">
    <property type="entry name" value="NAT_SF"/>
    <property type="match status" value="1"/>
</dbReference>
<dbReference type="FunFam" id="3.40.630.30:FF:000118">
    <property type="entry name" value="N-acetyltransferase family 8 member 3"/>
    <property type="match status" value="1"/>
</dbReference>
<dbReference type="Gene3D" id="3.40.630.30">
    <property type="match status" value="1"/>
</dbReference>
<dbReference type="InterPro" id="IPR016181">
    <property type="entry name" value="Acyl_CoA_acyltransferase"/>
</dbReference>
<dbReference type="InterPro" id="IPR000182">
    <property type="entry name" value="GNAT_dom"/>
</dbReference>
<dbReference type="InterPro" id="IPR050769">
    <property type="entry name" value="NAT_camello-type"/>
</dbReference>
<dbReference type="PANTHER" id="PTHR13947">
    <property type="entry name" value="GNAT FAMILY N-ACETYLTRANSFERASE"/>
    <property type="match status" value="1"/>
</dbReference>
<dbReference type="PANTHER" id="PTHR13947:SF48">
    <property type="entry name" value="N-ACETYLTRANSFERASE 8-RELATED"/>
    <property type="match status" value="1"/>
</dbReference>
<dbReference type="Pfam" id="PF00583">
    <property type="entry name" value="Acetyltransf_1"/>
    <property type="match status" value="1"/>
</dbReference>
<dbReference type="SUPFAM" id="SSF55729">
    <property type="entry name" value="Acyl-CoA N-acyltransferases (Nat)"/>
    <property type="match status" value="1"/>
</dbReference>
<dbReference type="PROSITE" id="PS51186">
    <property type="entry name" value="GNAT"/>
    <property type="match status" value="1"/>
</dbReference>